<proteinExistence type="inferred from homology"/>
<comment type="function">
    <text evidence="1">Specifically dimethylates two adjacent adenosines (A1518 and A1519) in the loop of a conserved hairpin near the 3'-end of 16S rRNA in the 30S particle. May play a critical role in biogenesis of 30S subunits.</text>
</comment>
<comment type="catalytic activity">
    <reaction evidence="1">
        <text>adenosine(1518)/adenosine(1519) in 16S rRNA + 4 S-adenosyl-L-methionine = N(6)-dimethyladenosine(1518)/N(6)-dimethyladenosine(1519) in 16S rRNA + 4 S-adenosyl-L-homocysteine + 4 H(+)</text>
        <dbReference type="Rhea" id="RHEA:19609"/>
        <dbReference type="Rhea" id="RHEA-COMP:10232"/>
        <dbReference type="Rhea" id="RHEA-COMP:10233"/>
        <dbReference type="ChEBI" id="CHEBI:15378"/>
        <dbReference type="ChEBI" id="CHEBI:57856"/>
        <dbReference type="ChEBI" id="CHEBI:59789"/>
        <dbReference type="ChEBI" id="CHEBI:74411"/>
        <dbReference type="ChEBI" id="CHEBI:74493"/>
        <dbReference type="EC" id="2.1.1.182"/>
    </reaction>
</comment>
<comment type="subcellular location">
    <subcellularLocation>
        <location evidence="1">Cytoplasm</location>
    </subcellularLocation>
</comment>
<comment type="similarity">
    <text evidence="1">Belongs to the class I-like SAM-binding methyltransferase superfamily. rRNA adenine N(6)-methyltransferase family. RsmA subfamily.</text>
</comment>
<comment type="sequence caution" evidence="2">
    <conflict type="erroneous initiation">
        <sequence resource="EMBL-CDS" id="CAG18834"/>
    </conflict>
</comment>
<evidence type="ECO:0000255" key="1">
    <source>
        <dbReference type="HAMAP-Rule" id="MF_00607"/>
    </source>
</evidence>
<evidence type="ECO:0000305" key="2"/>
<gene>
    <name evidence="1" type="primary">rsmA</name>
    <name evidence="1" type="synonym">ksgA</name>
    <name type="ordered locus">PBPRA0402</name>
</gene>
<accession>Q6LV41</accession>
<feature type="chain" id="PRO_0000101580" description="Ribosomal RNA small subunit methyltransferase A">
    <location>
        <begin position="1"/>
        <end position="271"/>
    </location>
</feature>
<feature type="binding site" evidence="1">
    <location>
        <position position="19"/>
    </location>
    <ligand>
        <name>S-adenosyl-L-methionine</name>
        <dbReference type="ChEBI" id="CHEBI:59789"/>
    </ligand>
</feature>
<feature type="binding site" evidence="1">
    <location>
        <position position="21"/>
    </location>
    <ligand>
        <name>S-adenosyl-L-methionine</name>
        <dbReference type="ChEBI" id="CHEBI:59789"/>
    </ligand>
</feature>
<feature type="binding site" evidence="1">
    <location>
        <position position="46"/>
    </location>
    <ligand>
        <name>S-adenosyl-L-methionine</name>
        <dbReference type="ChEBI" id="CHEBI:59789"/>
    </ligand>
</feature>
<feature type="binding site" evidence="1">
    <location>
        <position position="67"/>
    </location>
    <ligand>
        <name>S-adenosyl-L-methionine</name>
        <dbReference type="ChEBI" id="CHEBI:59789"/>
    </ligand>
</feature>
<feature type="binding site" evidence="1">
    <location>
        <position position="92"/>
    </location>
    <ligand>
        <name>S-adenosyl-L-methionine</name>
        <dbReference type="ChEBI" id="CHEBI:59789"/>
    </ligand>
</feature>
<feature type="binding site" evidence="1">
    <location>
        <position position="113"/>
    </location>
    <ligand>
        <name>S-adenosyl-L-methionine</name>
        <dbReference type="ChEBI" id="CHEBI:59789"/>
    </ligand>
</feature>
<name>RSMA_PHOPR</name>
<organism>
    <name type="scientific">Photobacterium profundum (strain SS9)</name>
    <dbReference type="NCBI Taxonomy" id="298386"/>
    <lineage>
        <taxon>Bacteria</taxon>
        <taxon>Pseudomonadati</taxon>
        <taxon>Pseudomonadota</taxon>
        <taxon>Gammaproteobacteria</taxon>
        <taxon>Vibrionales</taxon>
        <taxon>Vibrionaceae</taxon>
        <taxon>Photobacterium</taxon>
    </lineage>
</organism>
<sequence length="271" mass="30909">MSSDQVHLGHRARKRFGQNFLNDPYIIDGIVSSINPLPGQNLVEIGPGLGALTEPVGRLVDKFSVIELDRDLAKRLRHHPDLADKLTIYEGDAMRFDFTQLIKPNNKLRIFGNLPYNISTPLMFHLFTFHEHVEDMHFMLQKEVVNRLAAGPGCKAYGRLTVMAQYYSRVTPVLEVPPESFTPAPKVDSAVVRLTPYEVLPHPCTNLKWLDRVCREGFNQRRKTIRNCYKALLTVEQLEDLGVNPGLRPENITLQQFVKMANWLDANHQNA</sequence>
<dbReference type="EC" id="2.1.1.182" evidence="1"/>
<dbReference type="EMBL" id="CR378664">
    <property type="protein sequence ID" value="CAG18834.1"/>
    <property type="status" value="ALT_INIT"/>
    <property type="molecule type" value="Genomic_DNA"/>
</dbReference>
<dbReference type="RefSeq" id="WP_041393857.1">
    <property type="nucleotide sequence ID" value="NC_006370.1"/>
</dbReference>
<dbReference type="SMR" id="Q6LV41"/>
<dbReference type="STRING" id="298386.PBPRA0402"/>
<dbReference type="KEGG" id="ppr:PBPRA0402"/>
<dbReference type="eggNOG" id="COG0030">
    <property type="taxonomic scope" value="Bacteria"/>
</dbReference>
<dbReference type="HOGENOM" id="CLU_041220_0_1_6"/>
<dbReference type="Proteomes" id="UP000000593">
    <property type="component" value="Chromosome 1"/>
</dbReference>
<dbReference type="GO" id="GO:0005829">
    <property type="term" value="C:cytosol"/>
    <property type="evidence" value="ECO:0007669"/>
    <property type="project" value="TreeGrafter"/>
</dbReference>
<dbReference type="GO" id="GO:0052908">
    <property type="term" value="F:16S rRNA (adenine(1518)-N(6)/adenine(1519)-N(6))-dimethyltransferase activity"/>
    <property type="evidence" value="ECO:0007669"/>
    <property type="project" value="UniProtKB-EC"/>
</dbReference>
<dbReference type="GO" id="GO:0003723">
    <property type="term" value="F:RNA binding"/>
    <property type="evidence" value="ECO:0007669"/>
    <property type="project" value="UniProtKB-KW"/>
</dbReference>
<dbReference type="FunFam" id="1.10.8.100:FF:000001">
    <property type="entry name" value="Ribosomal RNA small subunit methyltransferase A"/>
    <property type="match status" value="1"/>
</dbReference>
<dbReference type="FunFam" id="3.40.50.150:FF:000006">
    <property type="entry name" value="Ribosomal RNA small subunit methyltransferase A"/>
    <property type="match status" value="1"/>
</dbReference>
<dbReference type="Gene3D" id="1.10.8.100">
    <property type="entry name" value="Ribosomal RNA adenine dimethylase-like, domain 2"/>
    <property type="match status" value="1"/>
</dbReference>
<dbReference type="Gene3D" id="3.40.50.150">
    <property type="entry name" value="Vaccinia Virus protein VP39"/>
    <property type="match status" value="1"/>
</dbReference>
<dbReference type="HAMAP" id="MF_00607">
    <property type="entry name" value="16SrRNA_methyltr_A"/>
    <property type="match status" value="1"/>
</dbReference>
<dbReference type="InterPro" id="IPR001737">
    <property type="entry name" value="KsgA/Erm"/>
</dbReference>
<dbReference type="InterPro" id="IPR023165">
    <property type="entry name" value="rRNA_Ade_diMease-like_C"/>
</dbReference>
<dbReference type="InterPro" id="IPR020596">
    <property type="entry name" value="rRNA_Ade_Mease_Trfase_CS"/>
</dbReference>
<dbReference type="InterPro" id="IPR020598">
    <property type="entry name" value="rRNA_Ade_methylase_Trfase_N"/>
</dbReference>
<dbReference type="InterPro" id="IPR011530">
    <property type="entry name" value="rRNA_adenine_dimethylase"/>
</dbReference>
<dbReference type="InterPro" id="IPR029063">
    <property type="entry name" value="SAM-dependent_MTases_sf"/>
</dbReference>
<dbReference type="NCBIfam" id="TIGR00755">
    <property type="entry name" value="ksgA"/>
    <property type="match status" value="1"/>
</dbReference>
<dbReference type="PANTHER" id="PTHR11727">
    <property type="entry name" value="DIMETHYLADENOSINE TRANSFERASE"/>
    <property type="match status" value="1"/>
</dbReference>
<dbReference type="PANTHER" id="PTHR11727:SF7">
    <property type="entry name" value="DIMETHYLADENOSINE TRANSFERASE-RELATED"/>
    <property type="match status" value="1"/>
</dbReference>
<dbReference type="Pfam" id="PF00398">
    <property type="entry name" value="RrnaAD"/>
    <property type="match status" value="1"/>
</dbReference>
<dbReference type="SMART" id="SM00650">
    <property type="entry name" value="rADc"/>
    <property type="match status" value="1"/>
</dbReference>
<dbReference type="SUPFAM" id="SSF53335">
    <property type="entry name" value="S-adenosyl-L-methionine-dependent methyltransferases"/>
    <property type="match status" value="1"/>
</dbReference>
<dbReference type="PROSITE" id="PS01131">
    <property type="entry name" value="RRNA_A_DIMETH"/>
    <property type="match status" value="1"/>
</dbReference>
<dbReference type="PROSITE" id="PS51689">
    <property type="entry name" value="SAM_RNA_A_N6_MT"/>
    <property type="match status" value="1"/>
</dbReference>
<reference key="1">
    <citation type="journal article" date="2005" name="Science">
        <title>Life at depth: Photobacterium profundum genome sequence and expression analysis.</title>
        <authorList>
            <person name="Vezzi A."/>
            <person name="Campanaro S."/>
            <person name="D'Angelo M."/>
            <person name="Simonato F."/>
            <person name="Vitulo N."/>
            <person name="Lauro F.M."/>
            <person name="Cestaro A."/>
            <person name="Malacrida G."/>
            <person name="Simionati B."/>
            <person name="Cannata N."/>
            <person name="Romualdi C."/>
            <person name="Bartlett D.H."/>
            <person name="Valle G."/>
        </authorList>
    </citation>
    <scope>NUCLEOTIDE SEQUENCE [LARGE SCALE GENOMIC DNA]</scope>
    <source>
        <strain>ATCC BAA-1253 / SS9</strain>
    </source>
</reference>
<keyword id="KW-0963">Cytoplasm</keyword>
<keyword id="KW-0489">Methyltransferase</keyword>
<keyword id="KW-1185">Reference proteome</keyword>
<keyword id="KW-0694">RNA-binding</keyword>
<keyword id="KW-0698">rRNA processing</keyword>
<keyword id="KW-0949">S-adenosyl-L-methionine</keyword>
<keyword id="KW-0808">Transferase</keyword>
<protein>
    <recommendedName>
        <fullName evidence="1">Ribosomal RNA small subunit methyltransferase A</fullName>
        <ecNumber evidence="1">2.1.1.182</ecNumber>
    </recommendedName>
    <alternativeName>
        <fullName evidence="1">16S rRNA (adenine(1518)-N(6)/adenine(1519)-N(6))-dimethyltransferase</fullName>
    </alternativeName>
    <alternativeName>
        <fullName evidence="1">16S rRNA dimethyladenosine transferase</fullName>
    </alternativeName>
    <alternativeName>
        <fullName evidence="1">16S rRNA dimethylase</fullName>
    </alternativeName>
    <alternativeName>
        <fullName evidence="1">S-adenosylmethionine-6-N', N'-adenosyl(rRNA) dimethyltransferase</fullName>
    </alternativeName>
</protein>